<name>PIMT_WHEAT</name>
<organism>
    <name type="scientific">Triticum aestivum</name>
    <name type="common">Wheat</name>
    <dbReference type="NCBI Taxonomy" id="4565"/>
    <lineage>
        <taxon>Eukaryota</taxon>
        <taxon>Viridiplantae</taxon>
        <taxon>Streptophyta</taxon>
        <taxon>Embryophyta</taxon>
        <taxon>Tracheophyta</taxon>
        <taxon>Spermatophyta</taxon>
        <taxon>Magnoliopsida</taxon>
        <taxon>Liliopsida</taxon>
        <taxon>Poales</taxon>
        <taxon>Poaceae</taxon>
        <taxon>BOP clade</taxon>
        <taxon>Pooideae</taxon>
        <taxon>Triticodae</taxon>
        <taxon>Triticeae</taxon>
        <taxon>Triticinae</taxon>
        <taxon>Triticum</taxon>
    </lineage>
</organism>
<proteinExistence type="evidence at protein level"/>
<dbReference type="EC" id="2.1.1.77"/>
<dbReference type="EMBL" id="L07941">
    <property type="protein sequence ID" value="AAA34297.1"/>
    <property type="molecule type" value="mRNA"/>
</dbReference>
<dbReference type="PIR" id="T06519">
    <property type="entry name" value="T06519"/>
</dbReference>
<dbReference type="SMR" id="Q43209"/>
<dbReference type="STRING" id="4565.Q43209"/>
<dbReference type="PaxDb" id="4565-Traes_2DL_F483F3232.1"/>
<dbReference type="EnsemblPlants" id="TraesRN2D0100822700.2">
    <property type="protein sequence ID" value="TraesRN2D0100822700.2"/>
    <property type="gene ID" value="TraesRN2D0100822700"/>
</dbReference>
<dbReference type="Gramene" id="TraesRN2D0100822700.2">
    <property type="protein sequence ID" value="TraesRN2D0100822700.2"/>
    <property type="gene ID" value="TraesRN2D0100822700"/>
</dbReference>
<dbReference type="eggNOG" id="KOG1661">
    <property type="taxonomic scope" value="Eukaryota"/>
</dbReference>
<dbReference type="Proteomes" id="UP000019116">
    <property type="component" value="Unplaced"/>
</dbReference>
<dbReference type="ExpressionAtlas" id="Q43209">
    <property type="expression patterns" value="baseline and differential"/>
</dbReference>
<dbReference type="GO" id="GO:0005737">
    <property type="term" value="C:cytoplasm"/>
    <property type="evidence" value="ECO:0000318"/>
    <property type="project" value="GO_Central"/>
</dbReference>
<dbReference type="GO" id="GO:0004719">
    <property type="term" value="F:protein-L-isoaspartate (D-aspartate) O-methyltransferase activity"/>
    <property type="evidence" value="ECO:0000318"/>
    <property type="project" value="GO_Central"/>
</dbReference>
<dbReference type="GO" id="GO:0032259">
    <property type="term" value="P:methylation"/>
    <property type="evidence" value="ECO:0007669"/>
    <property type="project" value="UniProtKB-KW"/>
</dbReference>
<dbReference type="GO" id="GO:0036211">
    <property type="term" value="P:protein modification process"/>
    <property type="evidence" value="ECO:0007669"/>
    <property type="project" value="InterPro"/>
</dbReference>
<dbReference type="CDD" id="cd02440">
    <property type="entry name" value="AdoMet_MTases"/>
    <property type="match status" value="1"/>
</dbReference>
<dbReference type="FunFam" id="3.40.50.150:FF:000027">
    <property type="entry name" value="Protein-L-isoaspartate O-methyltransferase"/>
    <property type="match status" value="1"/>
</dbReference>
<dbReference type="Gene3D" id="3.40.50.150">
    <property type="entry name" value="Vaccinia Virus protein VP39"/>
    <property type="match status" value="1"/>
</dbReference>
<dbReference type="InterPro" id="IPR000682">
    <property type="entry name" value="PCMT"/>
</dbReference>
<dbReference type="InterPro" id="IPR029063">
    <property type="entry name" value="SAM-dependent_MTases_sf"/>
</dbReference>
<dbReference type="NCBIfam" id="TIGR00080">
    <property type="entry name" value="pimt"/>
    <property type="match status" value="1"/>
</dbReference>
<dbReference type="PANTHER" id="PTHR11579">
    <property type="entry name" value="PROTEIN-L-ISOASPARTATE O-METHYLTRANSFERASE"/>
    <property type="match status" value="1"/>
</dbReference>
<dbReference type="PANTHER" id="PTHR11579:SF27">
    <property type="entry name" value="PROTEIN-L-ISOASPARTATE O-METHYLTRANSFERASE"/>
    <property type="match status" value="1"/>
</dbReference>
<dbReference type="Pfam" id="PF01135">
    <property type="entry name" value="PCMT"/>
    <property type="match status" value="1"/>
</dbReference>
<dbReference type="SUPFAM" id="SSF53335">
    <property type="entry name" value="S-adenosyl-L-methionine-dependent methyltransferases"/>
    <property type="match status" value="1"/>
</dbReference>
<dbReference type="PROSITE" id="PS01279">
    <property type="entry name" value="PCMT"/>
    <property type="match status" value="1"/>
</dbReference>
<accession>Q43209</accession>
<protein>
    <recommendedName>
        <fullName>Protein-L-isoaspartate O-methyltransferase</fullName>
        <shortName>PIMT</shortName>
        <ecNumber>2.1.1.77</ecNumber>
    </recommendedName>
    <alternativeName>
        <fullName>L-isoaspartyl protein carboxyl methyltransferase</fullName>
    </alternativeName>
    <alternativeName>
        <fullName>Protein L-isoaspartyl methyltransferase</fullName>
    </alternativeName>
    <alternativeName>
        <fullName>Protein-beta-aspartate methyltransferase</fullName>
    </alternativeName>
</protein>
<feature type="chain" id="PRO_0000111883" description="Protein-L-isoaspartate O-methyltransferase">
    <location>
        <begin position="1"/>
        <end position="230"/>
    </location>
</feature>
<feature type="active site" evidence="1">
    <location>
        <position position="65"/>
    </location>
</feature>
<feature type="sequence variant">
    <original>E</original>
    <variation>D</variation>
    <location>
        <position position="18"/>
    </location>
</feature>
<feature type="sequence variant">
    <original>A</original>
    <variation>N</variation>
    <location>
        <position position="41"/>
    </location>
</feature>
<feature type="sequence variant">
    <original>T</original>
    <variation>N</variation>
    <location>
        <position position="52"/>
    </location>
</feature>
<feature type="sequence variant">
    <original>S</original>
    <variation>L</variation>
    <location>
        <position position="54"/>
    </location>
</feature>
<feature type="sequence variant">
    <original>V</original>
    <variation>A</variation>
    <location>
        <position position="122"/>
    </location>
</feature>
<feature type="sequence variant">
    <original>S</original>
    <variation>L</variation>
    <location>
        <position position="143"/>
    </location>
</feature>
<feature type="sequence variant">
    <original>S</original>
    <variation>E</variation>
    <location>
        <position position="147"/>
    </location>
</feature>
<feature type="sequence variant">
    <original>A</original>
    <variation>V</variation>
    <location>
        <position position="156"/>
    </location>
</feature>
<feature type="sequence variant">
    <original>A</original>
    <variation>S</variation>
    <location>
        <position position="203"/>
    </location>
</feature>
<feature type="sequence variant">
    <original>S</original>
    <variation>T</variation>
    <location>
        <position position="208"/>
    </location>
</feature>
<feature type="sequence variant">
    <original>R</original>
    <variation>V</variation>
    <location>
        <position position="210"/>
    </location>
</feature>
<feature type="sequence variant">
    <original>S</original>
    <variation>T</variation>
    <location>
        <position position="214"/>
    </location>
</feature>
<evidence type="ECO:0000250" key="1"/>
<evidence type="ECO:0000305" key="2"/>
<comment type="function">
    <text>Catalyzes the methyl esterification of L-isoaspartyl residues in peptides and proteins that result from spontaneous decomposition of normal L-aspartyl and L-asparaginyl residues. It plays a role in the repair and/or degradation of damaged proteins. This enzyme does not act on D-aspartyl residues.</text>
</comment>
<comment type="catalytic activity">
    <reaction>
        <text>[protein]-L-isoaspartate + S-adenosyl-L-methionine = [protein]-L-isoaspartate alpha-methyl ester + S-adenosyl-L-homocysteine</text>
        <dbReference type="Rhea" id="RHEA:12705"/>
        <dbReference type="Rhea" id="RHEA-COMP:12143"/>
        <dbReference type="Rhea" id="RHEA-COMP:12144"/>
        <dbReference type="ChEBI" id="CHEBI:57856"/>
        <dbReference type="ChEBI" id="CHEBI:59789"/>
        <dbReference type="ChEBI" id="CHEBI:90596"/>
        <dbReference type="ChEBI" id="CHEBI:90598"/>
        <dbReference type="EC" id="2.1.1.77"/>
    </reaction>
</comment>
<comment type="subunit">
    <text>Monomer.</text>
</comment>
<comment type="subcellular location">
    <subcellularLocation>
        <location>Cytoplasm</location>
    </subcellularLocation>
</comment>
<comment type="tissue specificity">
    <text>Highest contents in seeds.</text>
</comment>
<comment type="similarity">
    <text evidence="2">Belongs to the methyltransferase superfamily. L-isoaspartyl/D-aspartyl protein methyltransferase family.</text>
</comment>
<gene>
    <name type="primary">PCM</name>
</gene>
<sequence>MAQFWAEGSLEKNNALVEYLKQYGVVRTDKVAEVMETIDRALFVPEGFTPYTDSPMPIGYNATISAPHMHATCLELLKDYLQPGMHALDVGSGSGYLTACFAMMVGPEGRAVGIEHIPELVVASTENVERSAAAALMKDGSLSFHVSDGRLGWPDAAPYDAIHVGAAAPEIPRPLLEQLKPGGRMVIPVGTYSQDLQVIDKSADGSTSVRNDASVRYVPLTSRSAQLQDS</sequence>
<reference key="1">
    <citation type="journal article" date="1993" name="Biochemistry">
        <title>Characterization of plant L-isoaspartyl methyltransferases that may be involved in seed survival: purification, cloning, and sequence analysis of the wheat germ enzyme.</title>
        <authorList>
            <person name="Mudgett M.B."/>
            <person name="Clarke S."/>
        </authorList>
    </citation>
    <scope>NUCLEOTIDE SEQUENCE [MRNA]</scope>
    <scope>PARTIAL PROTEIN SEQUENCE</scope>
    <scope>CHARACTERIZATION</scope>
    <source>
        <strain>cv. Augusta</strain>
    </source>
</reference>
<keyword id="KW-0963">Cytoplasm</keyword>
<keyword id="KW-0903">Direct protein sequencing</keyword>
<keyword id="KW-0489">Methyltransferase</keyword>
<keyword id="KW-1185">Reference proteome</keyword>
<keyword id="KW-0949">S-adenosyl-L-methionine</keyword>
<keyword id="KW-0808">Transferase</keyword>